<keyword id="KW-0963">Cytoplasm</keyword>
<keyword id="KW-0489">Methyltransferase</keyword>
<keyword id="KW-1185">Reference proteome</keyword>
<keyword id="KW-0698">rRNA processing</keyword>
<keyword id="KW-0949">S-adenosyl-L-methionine</keyword>
<keyword id="KW-0808">Transferase</keyword>
<comment type="function">
    <text evidence="1">Specifically methylates the N4 position of cytidine in position 1402 (C1402) of 16S rRNA.</text>
</comment>
<comment type="catalytic activity">
    <reaction evidence="1">
        <text>cytidine(1402) in 16S rRNA + S-adenosyl-L-methionine = N(4)-methylcytidine(1402) in 16S rRNA + S-adenosyl-L-homocysteine + H(+)</text>
        <dbReference type="Rhea" id="RHEA:42928"/>
        <dbReference type="Rhea" id="RHEA-COMP:10286"/>
        <dbReference type="Rhea" id="RHEA-COMP:10287"/>
        <dbReference type="ChEBI" id="CHEBI:15378"/>
        <dbReference type="ChEBI" id="CHEBI:57856"/>
        <dbReference type="ChEBI" id="CHEBI:59789"/>
        <dbReference type="ChEBI" id="CHEBI:74506"/>
        <dbReference type="ChEBI" id="CHEBI:82748"/>
        <dbReference type="EC" id="2.1.1.199"/>
    </reaction>
</comment>
<comment type="subcellular location">
    <subcellularLocation>
        <location evidence="1">Cytoplasm</location>
    </subcellularLocation>
</comment>
<comment type="similarity">
    <text evidence="1">Belongs to the methyltransferase superfamily. RsmH family.</text>
</comment>
<accession>A8FQ92</accession>
<sequence>MMSQEFAHLSVLLTETVAGLNIKEDGIYIDGTFGRGGHSREVLKHLGENGRLIAIDRDPQAIAAAEQFADDARFSIVHGGFGQLATYVEDLGLKGKIDGVLLDFGVSSPQLDDAERGFSFLRDGPLDMRMDNSQGETAADWIARAEIEDMAWVFKTYGEEKNSRHIARCIAADREKTPFLRTKELADLIARISKNKERNKHPATRVFQAIRIYINSELEQIDQALEGALSVLAPHGRLSVISFHSLEDRMVKRFIRRHCQGESVPHGLPITEAEINKSRLLKGIGKAIKPSEEEVERNTRARSSVLRIAERLEY</sequence>
<name>RSMH_SHESH</name>
<protein>
    <recommendedName>
        <fullName evidence="1">Ribosomal RNA small subunit methyltransferase H</fullName>
        <ecNumber evidence="1">2.1.1.199</ecNumber>
    </recommendedName>
    <alternativeName>
        <fullName evidence="1">16S rRNA m(4)C1402 methyltransferase</fullName>
    </alternativeName>
    <alternativeName>
        <fullName evidence="1">rRNA (cytosine-N(4)-)-methyltransferase RsmH</fullName>
    </alternativeName>
</protein>
<evidence type="ECO:0000255" key="1">
    <source>
        <dbReference type="HAMAP-Rule" id="MF_01007"/>
    </source>
</evidence>
<feature type="chain" id="PRO_0000387121" description="Ribosomal RNA small subunit methyltransferase H">
    <location>
        <begin position="1"/>
        <end position="314"/>
    </location>
</feature>
<feature type="binding site" evidence="1">
    <location>
        <begin position="36"/>
        <end position="38"/>
    </location>
    <ligand>
        <name>S-adenosyl-L-methionine</name>
        <dbReference type="ChEBI" id="CHEBI:59789"/>
    </ligand>
</feature>
<feature type="binding site" evidence="1">
    <location>
        <position position="56"/>
    </location>
    <ligand>
        <name>S-adenosyl-L-methionine</name>
        <dbReference type="ChEBI" id="CHEBI:59789"/>
    </ligand>
</feature>
<feature type="binding site" evidence="1">
    <location>
        <position position="81"/>
    </location>
    <ligand>
        <name>S-adenosyl-L-methionine</name>
        <dbReference type="ChEBI" id="CHEBI:59789"/>
    </ligand>
</feature>
<feature type="binding site" evidence="1">
    <location>
        <position position="103"/>
    </location>
    <ligand>
        <name>S-adenosyl-L-methionine</name>
        <dbReference type="ChEBI" id="CHEBI:59789"/>
    </ligand>
</feature>
<feature type="binding site" evidence="1">
    <location>
        <position position="110"/>
    </location>
    <ligand>
        <name>S-adenosyl-L-methionine</name>
        <dbReference type="ChEBI" id="CHEBI:59789"/>
    </ligand>
</feature>
<reference key="1">
    <citation type="submission" date="2007-08" db="EMBL/GenBank/DDBJ databases">
        <title>Complete sequence of Shewanella sediminis HAW-EB3.</title>
        <authorList>
            <consortium name="US DOE Joint Genome Institute"/>
            <person name="Copeland A."/>
            <person name="Lucas S."/>
            <person name="Lapidus A."/>
            <person name="Barry K."/>
            <person name="Glavina del Rio T."/>
            <person name="Dalin E."/>
            <person name="Tice H."/>
            <person name="Pitluck S."/>
            <person name="Chertkov O."/>
            <person name="Brettin T."/>
            <person name="Bruce D."/>
            <person name="Detter J.C."/>
            <person name="Han C."/>
            <person name="Schmutz J."/>
            <person name="Larimer F."/>
            <person name="Land M."/>
            <person name="Hauser L."/>
            <person name="Kyrpides N."/>
            <person name="Kim E."/>
            <person name="Zhao J.-S."/>
            <person name="Richardson P."/>
        </authorList>
    </citation>
    <scope>NUCLEOTIDE SEQUENCE [LARGE SCALE GENOMIC DNA]</scope>
    <source>
        <strain>HAW-EB3</strain>
    </source>
</reference>
<proteinExistence type="inferred from homology"/>
<dbReference type="EC" id="2.1.1.199" evidence="1"/>
<dbReference type="EMBL" id="CP000821">
    <property type="protein sequence ID" value="ABV35015.1"/>
    <property type="molecule type" value="Genomic_DNA"/>
</dbReference>
<dbReference type="SMR" id="A8FQ92"/>
<dbReference type="STRING" id="425104.Ssed_0402"/>
<dbReference type="KEGG" id="sse:Ssed_0402"/>
<dbReference type="eggNOG" id="COG0275">
    <property type="taxonomic scope" value="Bacteria"/>
</dbReference>
<dbReference type="HOGENOM" id="CLU_038422_2_0_6"/>
<dbReference type="Proteomes" id="UP000002015">
    <property type="component" value="Chromosome"/>
</dbReference>
<dbReference type="GO" id="GO:0005737">
    <property type="term" value="C:cytoplasm"/>
    <property type="evidence" value="ECO:0007669"/>
    <property type="project" value="UniProtKB-SubCell"/>
</dbReference>
<dbReference type="GO" id="GO:0071424">
    <property type="term" value="F:rRNA (cytosine-N4-)-methyltransferase activity"/>
    <property type="evidence" value="ECO:0007669"/>
    <property type="project" value="UniProtKB-UniRule"/>
</dbReference>
<dbReference type="GO" id="GO:0070475">
    <property type="term" value="P:rRNA base methylation"/>
    <property type="evidence" value="ECO:0007669"/>
    <property type="project" value="UniProtKB-UniRule"/>
</dbReference>
<dbReference type="FunFam" id="1.10.150.170:FF:000001">
    <property type="entry name" value="Ribosomal RNA small subunit methyltransferase H"/>
    <property type="match status" value="1"/>
</dbReference>
<dbReference type="Gene3D" id="1.10.150.170">
    <property type="entry name" value="Putative methyltransferase TM0872, insert domain"/>
    <property type="match status" value="1"/>
</dbReference>
<dbReference type="Gene3D" id="3.40.50.150">
    <property type="entry name" value="Vaccinia Virus protein VP39"/>
    <property type="match status" value="1"/>
</dbReference>
<dbReference type="HAMAP" id="MF_01007">
    <property type="entry name" value="16SrRNA_methyltr_H"/>
    <property type="match status" value="1"/>
</dbReference>
<dbReference type="InterPro" id="IPR002903">
    <property type="entry name" value="RsmH"/>
</dbReference>
<dbReference type="InterPro" id="IPR023397">
    <property type="entry name" value="SAM-dep_MeTrfase_MraW_recog"/>
</dbReference>
<dbReference type="InterPro" id="IPR029063">
    <property type="entry name" value="SAM-dependent_MTases_sf"/>
</dbReference>
<dbReference type="NCBIfam" id="TIGR00006">
    <property type="entry name" value="16S rRNA (cytosine(1402)-N(4))-methyltransferase RsmH"/>
    <property type="match status" value="1"/>
</dbReference>
<dbReference type="PANTHER" id="PTHR11265:SF0">
    <property type="entry name" value="12S RRNA N4-METHYLCYTIDINE METHYLTRANSFERASE"/>
    <property type="match status" value="1"/>
</dbReference>
<dbReference type="PANTHER" id="PTHR11265">
    <property type="entry name" value="S-ADENOSYL-METHYLTRANSFERASE MRAW"/>
    <property type="match status" value="1"/>
</dbReference>
<dbReference type="Pfam" id="PF01795">
    <property type="entry name" value="Methyltransf_5"/>
    <property type="match status" value="1"/>
</dbReference>
<dbReference type="PIRSF" id="PIRSF004486">
    <property type="entry name" value="MraW"/>
    <property type="match status" value="1"/>
</dbReference>
<dbReference type="SUPFAM" id="SSF81799">
    <property type="entry name" value="Putative methyltransferase TM0872, insert domain"/>
    <property type="match status" value="1"/>
</dbReference>
<dbReference type="SUPFAM" id="SSF53335">
    <property type="entry name" value="S-adenosyl-L-methionine-dependent methyltransferases"/>
    <property type="match status" value="1"/>
</dbReference>
<organism>
    <name type="scientific">Shewanella sediminis (strain HAW-EB3)</name>
    <dbReference type="NCBI Taxonomy" id="425104"/>
    <lineage>
        <taxon>Bacteria</taxon>
        <taxon>Pseudomonadati</taxon>
        <taxon>Pseudomonadota</taxon>
        <taxon>Gammaproteobacteria</taxon>
        <taxon>Alteromonadales</taxon>
        <taxon>Shewanellaceae</taxon>
        <taxon>Shewanella</taxon>
    </lineage>
</organism>
<gene>
    <name evidence="1" type="primary">rsmH</name>
    <name type="synonym">mraW</name>
    <name type="ordered locus">Ssed_0402</name>
</gene>